<proteinExistence type="evidence at protein level"/>
<organismHost>
    <name type="scientific">Homo sapiens</name>
    <name type="common">Human</name>
    <dbReference type="NCBI Taxonomy" id="9606"/>
</organismHost>
<evidence type="ECO:0000250" key="1"/>
<evidence type="ECO:0000250" key="2">
    <source>
        <dbReference type="UniProtKB" id="P03347"/>
    </source>
</evidence>
<evidence type="ECO:0000250" key="3">
    <source>
        <dbReference type="UniProtKB" id="P03348"/>
    </source>
</evidence>
<evidence type="ECO:0000250" key="4">
    <source>
        <dbReference type="UniProtKB" id="P03349"/>
    </source>
</evidence>
<evidence type="ECO:0000250" key="5">
    <source>
        <dbReference type="UniProtKB" id="P04591"/>
    </source>
</evidence>
<evidence type="ECO:0000250" key="6">
    <source>
        <dbReference type="UniProtKB" id="P12493"/>
    </source>
</evidence>
<evidence type="ECO:0000250" key="7">
    <source>
        <dbReference type="UniProtKB" id="P12497"/>
    </source>
</evidence>
<evidence type="ECO:0000305" key="8"/>
<evidence type="ECO:0007829" key="9">
    <source>
        <dbReference type="PDB" id="1FGL"/>
    </source>
</evidence>
<comment type="function">
    <molecule>Gag polyprotein</molecule>
    <text evidence="5">Mediates, with Gag-Pol polyprotein, the essential events in virion assembly, including binding the plasma membrane, making the protein-protein interactions necessary to create spherical particles, recruiting the viral Env proteins, and packaging the genomic RNA via direct interactions with the RNA packaging sequence (Psi).</text>
</comment>
<comment type="function">
    <molecule>Matrix protein p17</molecule>
    <text evidence="1 6">Targets the polyprotein to the plasma membrane via a multipartite membrane-binding signal, that includes its myristoylated N-terminus (By similarity). Matrix protein is part of the pre-integration complex. Implicated in the release from host cell mediated by Vpu. Binds to RNA (By similarity).</text>
</comment>
<comment type="function">
    <molecule>Capsid protein p24</molecule>
    <text evidence="5 6">Forms the conical core that encapsulates the genomic RNA-nucleocapsid complex in the virion. Most core are conical, with only 7% tubular. The core is constituted by capsid protein hexamer subunits. The core is disassembled soon after virion entry (By similarity). The capsid promotes immune invasion by cloaking viral DNA from CGAS detection (By similarity). Host restriction factors such as TRIM5-alpha or TRIMCyp bind retroviral capsids and cause premature capsid disassembly, leading to blocks in reverse transcription. Capsid restriction by TRIM5 is one of the factors which restricts HIV-1 to the human species. Host PIN1 apparently facilitates the virion uncoating (By similarity). On the other hand, interactions with PDZD8 or CYPA stabilize the capsid (By similarity).</text>
</comment>
<comment type="function">
    <molecule>Nucleocapsid protein p7</molecule>
    <text evidence="5">Encapsulates and protects viral dimeric unspliced genomic RNA (gRNA). Binds these RNAs through its zinc fingers. Acts as a nucleic acid chaperone which is involved in rearangement of nucleic acid secondary structure during gRNA retrotranscription. Also facilitates template switch leading to recombination. As part of the polyprotein, participates in gRNA dimerization, packaging, tRNA incorporation and virion assembly.</text>
</comment>
<comment type="function">
    <text evidence="6">p6-gag: Plays a role in budding of the assembled particle by interacting with the host class E VPS proteins TSG101 and PDCD6IP/AIP1.</text>
</comment>
<comment type="subunit">
    <text evidence="2 3 4 5 6">Gag polyprotein: Homotrimer; further assembles as hexamers of trimers. Oligomerization possibly creates a central hole into which the cytoplasmic tail of the gp41 envelope protein may be inserted. Gag polyprotein: Interacts with host TRIM22; this interaction seems to disrupt proper trafficking of Gag polyprotein and may interfere with budding. Gag polyprotein: Interacts with host PDZD8. Matrix protein p17: Homotrimer; further assembles as hexamers of trimers. Matrix protein p17: Interacts with gp41 (via C-terminus). Matrix protein p17: Interacts with host CALM1; this interaction induces a conformational change in the Matrix protein, triggering exposure of the myristate group. Matrix protein p17: Interacts with host AP3D1; this interaction allows the polyprotein trafficking to multivesicular bodies during virus assembly. Matrix protein p17: Part of the pre-integration complex (PIC) which is composed of viral genome, matrix protein, Vpr and integrase. Capsid protein p24: Homodimer; the homodimer further multimerizes as homohexamers or homopentamers. Capsid protein p24: Interacts with human PPIA/CYPA. Capsid protein p24: Interacts with human NUP153. Capsid protein p24: Interacts with host PDZD8; this interaction stabilizes the capsid. Capsid protein p24: Interacts with monkey TRIM5; this interaction destabilizes the capsid. p6-gag interacts with Vpr; this interaction allows Vpr incorporation into the virion. p6-gag interacts with host TSG101. p6-gag interacts with host PDCD6IP/AIP1. Gag polyprotein: When ubiquitinated, interacts (via p6-gag domain) with host PACSIN2; this interaction allows PACSIN2 recruitment to viral assembly sites and its subsequent incorporation into virions (By similarity).</text>
</comment>
<comment type="subunit">
    <molecule>Capsid protein p24</molecule>
    <text evidence="5 6">Homodimer; the homodimer further multimerizes as homohexamers or homopentamers (By similarity). Interacts with host NUP98 (By similarity). Interacts with host PPIA/CYPA; this interaction stabilizes the capsid (By similarity). Interacts with host NUP153 (By similarity). Interacts with host PDZD8; this interaction stabilizes the capsid. Interacts with host TRIM5; this interaction destabilizes the capsid (By similarity). Interacts with host CPSF6 (By similarity). Interacts with host NONO; the interaction is weak (By similarity).</text>
</comment>
<comment type="subunit">
    <molecule>Nucleocapsid protein p7</molecule>
    <text evidence="6">Interacts with host NUP98.</text>
</comment>
<comment type="subcellular location">
    <molecule>Gag polyprotein</molecule>
    <subcellularLocation>
        <location evidence="6">Host cell membrane</location>
        <topology evidence="6">Lipid-anchor</topology>
    </subcellularLocation>
    <subcellularLocation>
        <location evidence="6">Host endosome</location>
        <location evidence="6">Host multivesicular body</location>
    </subcellularLocation>
    <text evidence="6">These locations are probably linked to virus assembly sites. The main location is the cell membrane, but under some circumstances, late endosomal compartments can serve as productive sites for virion assembly.</text>
</comment>
<comment type="subcellular location">
    <molecule>Matrix protein p17</molecule>
    <subcellularLocation>
        <location evidence="6">Virion membrane</location>
        <topology evidence="6">Lipid-anchor</topology>
    </subcellularLocation>
    <subcellularLocation>
        <location evidence="1">Host nucleus</location>
    </subcellularLocation>
    <subcellularLocation>
        <location evidence="1">Host cytoplasm</location>
    </subcellularLocation>
</comment>
<comment type="subcellular location">
    <molecule>Capsid protein p24</molecule>
    <subcellularLocation>
        <location evidence="6">Virion</location>
    </subcellularLocation>
</comment>
<comment type="subcellular location">
    <molecule>Nucleocapsid protein p7</molecule>
    <subcellularLocation>
        <location evidence="6">Virion</location>
    </subcellularLocation>
</comment>
<comment type="alternative products">
    <event type="ribosomal frameshifting"/>
    <isoform>
        <id>P05889-1</id>
        <name>Gag polyprotein</name>
        <sequence type="displayed"/>
    </isoform>
    <isoform>
        <id>P05889-2</id>
        <name>Gag-Pol polyprotein</name>
        <sequence type="not described"/>
    </isoform>
    <text>Translation results in the formation of the Gag polyprotein most of the time. Ribosomal frameshifting at the gag-pol genes boundary occurs at low frequency and produces the Gag-Pol polyprotein. This strategy of translation probably allows the virus to modulate the quantity of each viral protein. Maintenance of a correct Gag to Gag-Pol ratio is essential for RNA dimerization and viral infectivity.</text>
</comment>
<comment type="domain">
    <text evidence="6">Late-budding domains (L domains) are short sequence motifs essential for viral particle budding. They recruit proteins of the host ESCRT machinery (Endosomal Sorting Complex Required for Transport) or ESCRT-associated proteins. p6-gag contains two L domains: a PTAP/PSAP motif, which interacts with the UEV domain of TSG101 and a LYPX(n)L motif which interacts with PDCD6IP/AIP1.</text>
</comment>
<comment type="PTM">
    <molecule>Isoform Gag-Pol polyprotein</molecule>
    <text evidence="6">Specific enzymatic cleavages by the viral protease yield mature proteins.</text>
</comment>
<comment type="PTM">
    <molecule>Matrix protein p17</molecule>
    <text evidence="5">Tyrosine phosphorylated presumably in the virion by a host kinase. Phosphorylation is apparently not a major regulator of membrane association.</text>
</comment>
<comment type="PTM">
    <text evidence="6">Capsid protein p24 is phosphorylated possibly by host MAPK1; this phosphorylation is necessary for Pin1-mediated virion uncoating.</text>
</comment>
<comment type="PTM">
    <text evidence="2">Nucleocapsid protein p7 is methylated by host PRMT6, impairing its function by reducing RNA annealing and the initiation of reverse transcription.</text>
</comment>
<comment type="miscellaneous">
    <text>Isolates WMJ1, WMJ2, and WMJ3 were obtained from blood samples sequentially taken from a two-year old Haitian who was perinatally infected by her mother.</text>
</comment>
<comment type="miscellaneous">
    <text>HIV-1 lineages are divided in three main groups, M (for Major), O (for Outlier), and N (for New, or Non-M, Non-O). The vast majority of strains found worldwide belong to the group M. Group O seems to be endemic to and largely confined to Cameroon and neighboring countries in West Central Africa, where these viruses represent a small minority of HIV-1 strains. The group N is represented by a limited number of isolates from Cameroonian persons. The group M is further subdivided in 9 clades or subtypes (A to D, F to H, J and K).</text>
</comment>
<comment type="miscellaneous">
    <molecule>Isoform Gag polyprotein</molecule>
    <text>Produced by conventional translation.</text>
</comment>
<comment type="miscellaneous">
    <molecule>Isoform Gag-Pol polyprotein</molecule>
    <text evidence="8">Produced by -1 ribosomal frameshifting.</text>
</comment>
<comment type="similarity">
    <text evidence="8">Belongs to the primate lentivirus group gag polyprotein family.</text>
</comment>
<protein>
    <recommendedName>
        <fullName>Gag polyprotein</fullName>
    </recommendedName>
    <alternativeName>
        <fullName>Pr55Gag</fullName>
    </alternativeName>
    <component>
        <recommendedName>
            <fullName>Matrix protein p17</fullName>
            <shortName>MA</shortName>
        </recommendedName>
    </component>
    <component>
        <recommendedName>
            <fullName>Capsid protein p24</fullName>
            <shortName>CA</shortName>
        </recommendedName>
    </component>
    <component>
        <recommendedName>
            <fullName evidence="6">Spacer peptide 1</fullName>
            <shortName>SP1</shortName>
        </recommendedName>
        <alternativeName>
            <fullName>p2</fullName>
        </alternativeName>
    </component>
    <component>
        <recommendedName>
            <fullName evidence="6">Nucleocapsid protein p7</fullName>
            <shortName>NC</shortName>
        </recommendedName>
    </component>
</protein>
<reference key="1">
    <citation type="journal article" date="1986" name="Science">
        <title>Genetic variation in HTLV-III/LAV over time in patients with AIDS or at risk for AIDS.</title>
        <authorList>
            <person name="Hahn B.H."/>
            <person name="Shaw G.M."/>
            <person name="Taylor M.E."/>
            <person name="Redfield R.R."/>
            <person name="Markham P.D."/>
            <person name="Salahuddin S.Z."/>
            <person name="Wong-Staal F."/>
            <person name="Gallo R.C."/>
            <person name="Parks E.S."/>
            <person name="Parks W.P."/>
        </authorList>
    </citation>
    <scope>NUCLEOTIDE SEQUENCE [GENOMIC RNA]</scope>
</reference>
<reference key="2">
    <citation type="journal article" date="2003" name="Biochim. Biophys. Acta">
        <title>Role of HIV-1 Gag domains in viral assembly.</title>
        <authorList>
            <person name="Scarlata S."/>
            <person name="Carter C."/>
        </authorList>
    </citation>
    <scope>REVIEW</scope>
</reference>
<gene>
    <name type="primary">gag</name>
</gene>
<feature type="initiator methionine" description="Removed; by host" evidence="1">
    <location>
        <position position="1"/>
    </location>
</feature>
<feature type="chain" id="PRO_0000261235" description="Gag polyprotein">
    <location>
        <begin position="2"/>
        <end position="389" status="greater than"/>
    </location>
</feature>
<feature type="chain" id="PRO_0000038589" description="Matrix protein p17" evidence="1">
    <location>
        <begin position="2"/>
        <end position="132"/>
    </location>
</feature>
<feature type="chain" id="PRO_0000038590" description="Capsid protein p24" evidence="1">
    <location>
        <begin position="133"/>
        <end position="363"/>
    </location>
</feature>
<feature type="peptide" id="PRO_0000038591" description="Spacer peptide 1" evidence="1">
    <location>
        <begin position="364"/>
        <end position="377"/>
    </location>
</feature>
<feature type="chain" id="PRO_0000038592" description="Nucleocapsid protein p7" evidence="1">
    <location>
        <begin position="378"/>
        <end position="389" status="greater than"/>
    </location>
</feature>
<feature type="region of interest" description="Interaction with Gp41" evidence="6">
    <location>
        <begin position="7"/>
        <end position="31"/>
    </location>
</feature>
<feature type="region of interest" description="Interaction with host CALM1" evidence="5">
    <location>
        <begin position="8"/>
        <end position="43"/>
    </location>
</feature>
<feature type="region of interest" description="Interaction with host AP3D1" evidence="7">
    <location>
        <begin position="12"/>
        <end position="19"/>
    </location>
</feature>
<feature type="region of interest" description="Interaction with membrane phosphatidylinositol 4,5-bisphosphate and RNA" evidence="6">
    <location>
        <begin position="14"/>
        <end position="33"/>
    </location>
</feature>
<feature type="region of interest" description="Interaction with membrane phosphatidylinositol 4,5-bisphosphate" evidence="6">
    <location>
        <begin position="73"/>
        <end position="77"/>
    </location>
</feature>
<feature type="region of interest" description="Interaction with host PPIA/CYPA and NUP153" evidence="6">
    <location>
        <begin position="189"/>
        <end position="227"/>
    </location>
</feature>
<feature type="region of interest" description="PPIA/CYPA-binding loop" evidence="5">
    <location>
        <begin position="217"/>
        <end position="225"/>
    </location>
</feature>
<feature type="region of interest" description="Dimerization/Multimerization of capsid protein p24" evidence="5">
    <location>
        <begin position="277"/>
        <end position="363"/>
    </location>
</feature>
<feature type="short sequence motif" description="Nuclear export signal" evidence="1">
    <location>
        <begin position="16"/>
        <end position="22"/>
    </location>
</feature>
<feature type="short sequence motif" description="Nuclear localization signal" evidence="1">
    <location>
        <begin position="26"/>
        <end position="32"/>
    </location>
</feature>
<feature type="site" description="Cleavage; by viral protease" evidence="1">
    <location>
        <begin position="132"/>
        <end position="133"/>
    </location>
</feature>
<feature type="site" description="Cleavage; by viral protease" evidence="1">
    <location>
        <begin position="363"/>
        <end position="364"/>
    </location>
</feature>
<feature type="site" description="Cleavage; by viral protease" evidence="1">
    <location>
        <begin position="377"/>
        <end position="378"/>
    </location>
</feature>
<feature type="modified residue" description="Phosphoserine; by host MAPK1" evidence="6">
    <location>
        <position position="148"/>
    </location>
</feature>
<feature type="modified residue" description="Asymmetric dimethylarginine; in Nucleocapsid protein p7; by host PRMT6" evidence="1">
    <location>
        <position position="387"/>
    </location>
</feature>
<feature type="lipid moiety-binding region" description="N-myristoyl glycine; by host" evidence="1">
    <location>
        <position position="2"/>
    </location>
</feature>
<feature type="non-terminal residue">
    <location>
        <position position="389"/>
    </location>
</feature>
<feature type="helix" evidence="9">
    <location>
        <begin position="225"/>
        <end position="228"/>
    </location>
</feature>
<organism>
    <name type="scientific">Human immunodeficiency virus type 1 group M subtype B (isolate WMJ22)</name>
    <name type="common">HIV-1</name>
    <dbReference type="NCBI Taxonomy" id="11705"/>
    <lineage>
        <taxon>Viruses</taxon>
        <taxon>Riboviria</taxon>
        <taxon>Pararnavirae</taxon>
        <taxon>Artverviricota</taxon>
        <taxon>Revtraviricetes</taxon>
        <taxon>Ortervirales</taxon>
        <taxon>Retroviridae</taxon>
        <taxon>Orthoretrovirinae</taxon>
        <taxon>Lentivirus</taxon>
        <taxon>Human immunodeficiency virus type 1</taxon>
    </lineage>
</organism>
<dbReference type="EMBL" id="AH003669">
    <property type="protein sequence ID" value="AAB12988.1"/>
    <property type="molecule type" value="Genomic_RNA"/>
</dbReference>
<dbReference type="PDB" id="1FGL">
    <property type="method" value="X-ray"/>
    <property type="resolution" value="1.80 A"/>
    <property type="chains" value="B=213-237"/>
</dbReference>
<dbReference type="PDBsum" id="1FGL"/>
<dbReference type="SMR" id="P05889"/>
<dbReference type="CD-CODE" id="C4086E78">
    <property type="entry name" value="HIV core condensate"/>
</dbReference>
<dbReference type="EvolutionaryTrace" id="P05889"/>
<dbReference type="GO" id="GO:0042025">
    <property type="term" value="C:host cell nucleus"/>
    <property type="evidence" value="ECO:0007669"/>
    <property type="project" value="UniProtKB-SubCell"/>
</dbReference>
<dbReference type="GO" id="GO:0020002">
    <property type="term" value="C:host cell plasma membrane"/>
    <property type="evidence" value="ECO:0007669"/>
    <property type="project" value="UniProtKB-SubCell"/>
</dbReference>
<dbReference type="GO" id="GO:0072494">
    <property type="term" value="C:host multivesicular body"/>
    <property type="evidence" value="ECO:0007669"/>
    <property type="project" value="UniProtKB-SubCell"/>
</dbReference>
<dbReference type="GO" id="GO:0016020">
    <property type="term" value="C:membrane"/>
    <property type="evidence" value="ECO:0007669"/>
    <property type="project" value="UniProtKB-KW"/>
</dbReference>
<dbReference type="GO" id="GO:0019013">
    <property type="term" value="C:viral nucleocapsid"/>
    <property type="evidence" value="ECO:0007669"/>
    <property type="project" value="UniProtKB-KW"/>
</dbReference>
<dbReference type="GO" id="GO:0055036">
    <property type="term" value="C:virion membrane"/>
    <property type="evidence" value="ECO:0007669"/>
    <property type="project" value="UniProtKB-SubCell"/>
</dbReference>
<dbReference type="GO" id="GO:0003723">
    <property type="term" value="F:RNA binding"/>
    <property type="evidence" value="ECO:0007669"/>
    <property type="project" value="UniProtKB-KW"/>
</dbReference>
<dbReference type="GO" id="GO:0005198">
    <property type="term" value="F:structural molecule activity"/>
    <property type="evidence" value="ECO:0007669"/>
    <property type="project" value="InterPro"/>
</dbReference>
<dbReference type="GO" id="GO:0075523">
    <property type="term" value="P:viral translational frameshifting"/>
    <property type="evidence" value="ECO:0007669"/>
    <property type="project" value="UniProtKB-KW"/>
</dbReference>
<dbReference type="FunFam" id="1.10.1200.30:FF:000001">
    <property type="entry name" value="Gag polyprotein"/>
    <property type="match status" value="1"/>
</dbReference>
<dbReference type="FunFam" id="1.10.150.90:FF:000001">
    <property type="entry name" value="Gag polyprotein"/>
    <property type="match status" value="1"/>
</dbReference>
<dbReference type="FunFam" id="1.10.375.10:FF:000001">
    <property type="entry name" value="Gag polyprotein"/>
    <property type="match status" value="1"/>
</dbReference>
<dbReference type="FunFam" id="1.20.5.760:FF:000001">
    <property type="entry name" value="Gag polyprotein"/>
    <property type="match status" value="1"/>
</dbReference>
<dbReference type="Gene3D" id="1.10.1200.30">
    <property type="match status" value="1"/>
</dbReference>
<dbReference type="Gene3D" id="1.10.375.10">
    <property type="entry name" value="Human Immunodeficiency Virus Type 1 Capsid Protein"/>
    <property type="match status" value="1"/>
</dbReference>
<dbReference type="Gene3D" id="1.10.150.90">
    <property type="entry name" value="Immunodeficiency lentiviruses, gag gene matrix protein p17"/>
    <property type="match status" value="1"/>
</dbReference>
<dbReference type="Gene3D" id="1.20.5.760">
    <property type="entry name" value="Single helix bin"/>
    <property type="match status" value="1"/>
</dbReference>
<dbReference type="InterPro" id="IPR045345">
    <property type="entry name" value="Gag_p24_C"/>
</dbReference>
<dbReference type="InterPro" id="IPR000071">
    <property type="entry name" value="Lentvrl_matrix_N"/>
</dbReference>
<dbReference type="InterPro" id="IPR012344">
    <property type="entry name" value="Matrix_HIV/RSV_N"/>
</dbReference>
<dbReference type="InterPro" id="IPR050195">
    <property type="entry name" value="Primate_lentivir_Gag_pol-like"/>
</dbReference>
<dbReference type="InterPro" id="IPR008916">
    <property type="entry name" value="Retrov_capsid_C"/>
</dbReference>
<dbReference type="InterPro" id="IPR008919">
    <property type="entry name" value="Retrov_capsid_N"/>
</dbReference>
<dbReference type="InterPro" id="IPR010999">
    <property type="entry name" value="Retrovr_matrix"/>
</dbReference>
<dbReference type="PANTHER" id="PTHR40389">
    <property type="entry name" value="ENDOGENOUS RETROVIRUS GROUP K MEMBER 24 GAG POLYPROTEIN-RELATED"/>
    <property type="match status" value="1"/>
</dbReference>
<dbReference type="PANTHER" id="PTHR40389:SF2">
    <property type="entry name" value="ENDOGENOUS RETROVIRUS GROUP K MEMBER 24 GAG POLYPROTEIN-RELATED"/>
    <property type="match status" value="1"/>
</dbReference>
<dbReference type="Pfam" id="PF00540">
    <property type="entry name" value="Gag_p17"/>
    <property type="match status" value="1"/>
</dbReference>
<dbReference type="Pfam" id="PF00607">
    <property type="entry name" value="Gag_p24"/>
    <property type="match status" value="1"/>
</dbReference>
<dbReference type="Pfam" id="PF19317">
    <property type="entry name" value="Gag_p24_C"/>
    <property type="match status" value="1"/>
</dbReference>
<dbReference type="PRINTS" id="PR00234">
    <property type="entry name" value="HIV1MATRIX"/>
</dbReference>
<dbReference type="SUPFAM" id="SSF47836">
    <property type="entry name" value="Retroviral matrix proteins"/>
    <property type="match status" value="1"/>
</dbReference>
<dbReference type="SUPFAM" id="SSF47353">
    <property type="entry name" value="Retrovirus capsid dimerization domain-like"/>
    <property type="match status" value="1"/>
</dbReference>
<dbReference type="SUPFAM" id="SSF47943">
    <property type="entry name" value="Retrovirus capsid protein, N-terminal core domain"/>
    <property type="match status" value="1"/>
</dbReference>
<keyword id="KW-0002">3D-structure</keyword>
<keyword id="KW-0014">AIDS</keyword>
<keyword id="KW-0167">Capsid protein</keyword>
<keyword id="KW-1032">Host cell membrane</keyword>
<keyword id="KW-1035">Host cytoplasm</keyword>
<keyword id="KW-1039">Host endosome</keyword>
<keyword id="KW-1043">Host membrane</keyword>
<keyword id="KW-1048">Host nucleus</keyword>
<keyword id="KW-0449">Lipoprotein</keyword>
<keyword id="KW-0472">Membrane</keyword>
<keyword id="KW-0488">Methylation</keyword>
<keyword id="KW-0519">Myristate</keyword>
<keyword id="KW-0597">Phosphoprotein</keyword>
<keyword id="KW-0688">Ribosomal frameshifting</keyword>
<keyword id="KW-0694">RNA-binding</keyword>
<keyword id="KW-0543">Viral nucleoprotein</keyword>
<keyword id="KW-0946">Virion</keyword>
<name>GAG_HV1W2</name>
<accession>P05889</accession>
<sequence length="389" mass="43446">MGARASVLSGGELDKWEKIRLRPGGKKKYRLKHIVWASRELERFAVNPGLLETSEGCRQILGQLQPSLQTGSEELRSLYNTVATLYCVHQRIEKKDTKEALDKIEEEQNKCKKKAQQAAADTGNSSQVSQNYPIVQNLQGQMVHQAISPRTLNAWVKVVEEKAFSPEVIPMFSALSEGATPQDLNTMLNTVGGHQAAMQMLKETINEEAAEWDRLHPVHAGPIAPGQMREPRGSDIAGTTSTLQEQIGWMTNNPPIPVGEIYKRWIILGLNKIVRMYSPTSILDIRQGPKEPFRDYVDRFYKTLRAEQATQEVKNWMTETLLVQNANPDCKTILKALGPAATLEEMMTACQGVGGPGHKARVLAEAMSQVTNPTTIMMQKGNFRNQRKT</sequence>